<comment type="function">
    <text evidence="1">Poorly processive, error-prone DNA polymerase involved in untargeted mutagenesis. Copies undamaged DNA at stalled replication forks, which arise in vivo from mismatched or misaligned primer ends. These misaligned primers can be extended by PolIV. Exhibits no 3'-5' exonuclease (proofreading) activity. May be involved in translesional synthesis, in conjunction with the beta clamp from PolIII.</text>
</comment>
<comment type="catalytic activity">
    <reaction evidence="1">
        <text>DNA(n) + a 2'-deoxyribonucleoside 5'-triphosphate = DNA(n+1) + diphosphate</text>
        <dbReference type="Rhea" id="RHEA:22508"/>
        <dbReference type="Rhea" id="RHEA-COMP:17339"/>
        <dbReference type="Rhea" id="RHEA-COMP:17340"/>
        <dbReference type="ChEBI" id="CHEBI:33019"/>
        <dbReference type="ChEBI" id="CHEBI:61560"/>
        <dbReference type="ChEBI" id="CHEBI:173112"/>
        <dbReference type="EC" id="2.7.7.7"/>
    </reaction>
</comment>
<comment type="cofactor">
    <cofactor evidence="1">
        <name>Mg(2+)</name>
        <dbReference type="ChEBI" id="CHEBI:18420"/>
    </cofactor>
    <text evidence="1">Binds 2 magnesium ions per subunit.</text>
</comment>
<comment type="subunit">
    <text evidence="1">Monomer.</text>
</comment>
<comment type="subcellular location">
    <subcellularLocation>
        <location evidence="1">Cytoplasm</location>
    </subcellularLocation>
</comment>
<comment type="similarity">
    <text evidence="1">Belongs to the DNA polymerase type-Y family.</text>
</comment>
<proteinExistence type="inferred from homology"/>
<feature type="chain" id="PRO_1000084919" description="DNA polymerase IV">
    <location>
        <begin position="1"/>
        <end position="354"/>
    </location>
</feature>
<feature type="domain" description="UmuC" evidence="1">
    <location>
        <begin position="6"/>
        <end position="187"/>
    </location>
</feature>
<feature type="active site" evidence="1">
    <location>
        <position position="106"/>
    </location>
</feature>
<feature type="binding site" evidence="1">
    <location>
        <position position="10"/>
    </location>
    <ligand>
        <name>Mg(2+)</name>
        <dbReference type="ChEBI" id="CHEBI:18420"/>
    </ligand>
</feature>
<feature type="binding site" evidence="1">
    <location>
        <position position="105"/>
    </location>
    <ligand>
        <name>Mg(2+)</name>
        <dbReference type="ChEBI" id="CHEBI:18420"/>
    </ligand>
</feature>
<feature type="site" description="Substrate discrimination" evidence="1">
    <location>
        <position position="15"/>
    </location>
</feature>
<reference key="1">
    <citation type="journal article" date="2005" name="Proc. Natl. Acad. Sci. U.S.A.">
        <title>Comparison of the complete genome sequences of Pseudomonas syringae pv. syringae B728a and pv. tomato DC3000.</title>
        <authorList>
            <person name="Feil H."/>
            <person name="Feil W.S."/>
            <person name="Chain P."/>
            <person name="Larimer F."/>
            <person name="Dibartolo G."/>
            <person name="Copeland A."/>
            <person name="Lykidis A."/>
            <person name="Trong S."/>
            <person name="Nolan M."/>
            <person name="Goltsman E."/>
            <person name="Thiel J."/>
            <person name="Malfatti S."/>
            <person name="Loper J.E."/>
            <person name="Lapidus A."/>
            <person name="Detter J.C."/>
            <person name="Land M."/>
            <person name="Richardson P.M."/>
            <person name="Kyrpides N.C."/>
            <person name="Ivanova N."/>
            <person name="Lindow S.E."/>
        </authorList>
    </citation>
    <scope>NUCLEOTIDE SEQUENCE [LARGE SCALE GENOMIC DNA]</scope>
    <source>
        <strain>B728a</strain>
    </source>
</reference>
<accession>Q4ZWM4</accession>
<keyword id="KW-0963">Cytoplasm</keyword>
<keyword id="KW-0227">DNA damage</keyword>
<keyword id="KW-0234">DNA repair</keyword>
<keyword id="KW-0235">DNA replication</keyword>
<keyword id="KW-0238">DNA-binding</keyword>
<keyword id="KW-0239">DNA-directed DNA polymerase</keyword>
<keyword id="KW-0460">Magnesium</keyword>
<keyword id="KW-0479">Metal-binding</keyword>
<keyword id="KW-0515">Mutator protein</keyword>
<keyword id="KW-0548">Nucleotidyltransferase</keyword>
<keyword id="KW-0808">Transferase</keyword>
<organism>
    <name type="scientific">Pseudomonas syringae pv. syringae (strain B728a)</name>
    <dbReference type="NCBI Taxonomy" id="205918"/>
    <lineage>
        <taxon>Bacteria</taxon>
        <taxon>Pseudomonadati</taxon>
        <taxon>Pseudomonadota</taxon>
        <taxon>Gammaproteobacteria</taxon>
        <taxon>Pseudomonadales</taxon>
        <taxon>Pseudomonadaceae</taxon>
        <taxon>Pseudomonas</taxon>
        <taxon>Pseudomonas syringae</taxon>
    </lineage>
</organism>
<gene>
    <name evidence="1" type="primary">dinB</name>
    <name type="ordered locus">Psyr_1397</name>
</gene>
<name>DPO4_PSEU2</name>
<protein>
    <recommendedName>
        <fullName evidence="1">DNA polymerase IV</fullName>
        <shortName evidence="1">Pol IV</shortName>
        <ecNumber evidence="1">2.7.7.7</ecNumber>
    </recommendedName>
</protein>
<evidence type="ECO:0000255" key="1">
    <source>
        <dbReference type="HAMAP-Rule" id="MF_01113"/>
    </source>
</evidence>
<sequence length="354" mass="39305">MTQRKIIHIDCDCFYAAIEMRDEPDLAGKPLAVGGSAERRGVIATCNYEARAYGVRSAMSSRHALKLCPDLTIVKPRMDAYKEASREIHTIFRDYTDLIEPLSLDEAFLDVSEAGHFSGSATRIAQDIRRRVSNQLHITVSAGVAPNKFLAKIASDWKKPNGLFVITPDQVEEFVASLPVTKLHGVGKVTADKLGRLGIVDCADLRSRSKLALVREFGSFGERLWSLAHGIDDRPVQNDSRRQSVSVENTYDTDLPDLAACLEKLPDLLETLSGRMARMEGQYRPGKPFVKVKFHDFTQTTLEQSGAGRDLGSYEQLLAQAFARGGKPVRLLGIGVRLHDLRAAHEQLELFSRQ</sequence>
<dbReference type="EC" id="2.7.7.7" evidence="1"/>
<dbReference type="EMBL" id="CP000075">
    <property type="protein sequence ID" value="AAY36448.1"/>
    <property type="molecule type" value="Genomic_DNA"/>
</dbReference>
<dbReference type="RefSeq" id="WP_004406165.1">
    <property type="nucleotide sequence ID" value="NC_007005.1"/>
</dbReference>
<dbReference type="RefSeq" id="YP_234486.1">
    <property type="nucleotide sequence ID" value="NC_007005.1"/>
</dbReference>
<dbReference type="SMR" id="Q4ZWM4"/>
<dbReference type="STRING" id="205918.Psyr_1397"/>
<dbReference type="KEGG" id="psb:Psyr_1397"/>
<dbReference type="PATRIC" id="fig|205918.7.peg.1431"/>
<dbReference type="eggNOG" id="COG0389">
    <property type="taxonomic scope" value="Bacteria"/>
</dbReference>
<dbReference type="HOGENOM" id="CLU_012348_1_2_6"/>
<dbReference type="OrthoDB" id="9808813at2"/>
<dbReference type="Proteomes" id="UP000000426">
    <property type="component" value="Chromosome"/>
</dbReference>
<dbReference type="GO" id="GO:0005829">
    <property type="term" value="C:cytosol"/>
    <property type="evidence" value="ECO:0007669"/>
    <property type="project" value="TreeGrafter"/>
</dbReference>
<dbReference type="GO" id="GO:0003684">
    <property type="term" value="F:damaged DNA binding"/>
    <property type="evidence" value="ECO:0007669"/>
    <property type="project" value="InterPro"/>
</dbReference>
<dbReference type="GO" id="GO:0003887">
    <property type="term" value="F:DNA-directed DNA polymerase activity"/>
    <property type="evidence" value="ECO:0007669"/>
    <property type="project" value="UniProtKB-UniRule"/>
</dbReference>
<dbReference type="GO" id="GO:0000287">
    <property type="term" value="F:magnesium ion binding"/>
    <property type="evidence" value="ECO:0007669"/>
    <property type="project" value="UniProtKB-UniRule"/>
</dbReference>
<dbReference type="GO" id="GO:0006261">
    <property type="term" value="P:DNA-templated DNA replication"/>
    <property type="evidence" value="ECO:0007669"/>
    <property type="project" value="UniProtKB-UniRule"/>
</dbReference>
<dbReference type="GO" id="GO:0042276">
    <property type="term" value="P:error-prone translesion synthesis"/>
    <property type="evidence" value="ECO:0007669"/>
    <property type="project" value="TreeGrafter"/>
</dbReference>
<dbReference type="GO" id="GO:0009432">
    <property type="term" value="P:SOS response"/>
    <property type="evidence" value="ECO:0007669"/>
    <property type="project" value="TreeGrafter"/>
</dbReference>
<dbReference type="CDD" id="cd03586">
    <property type="entry name" value="PolY_Pol_IV_kappa"/>
    <property type="match status" value="1"/>
</dbReference>
<dbReference type="FunFam" id="1.10.150.20:FF:000019">
    <property type="entry name" value="DNA polymerase IV"/>
    <property type="match status" value="1"/>
</dbReference>
<dbReference type="FunFam" id="3.30.1490.100:FF:000011">
    <property type="entry name" value="DNA polymerase IV"/>
    <property type="match status" value="1"/>
</dbReference>
<dbReference type="FunFam" id="3.30.70.270:FF:000002">
    <property type="entry name" value="DNA polymerase IV"/>
    <property type="match status" value="1"/>
</dbReference>
<dbReference type="FunFam" id="3.40.1170.60:FF:000001">
    <property type="entry name" value="DNA polymerase IV"/>
    <property type="match status" value="1"/>
</dbReference>
<dbReference type="Gene3D" id="3.30.70.270">
    <property type="match status" value="1"/>
</dbReference>
<dbReference type="Gene3D" id="3.40.1170.60">
    <property type="match status" value="1"/>
</dbReference>
<dbReference type="Gene3D" id="1.10.150.20">
    <property type="entry name" value="5' to 3' exonuclease, C-terminal subdomain"/>
    <property type="match status" value="1"/>
</dbReference>
<dbReference type="Gene3D" id="3.30.1490.100">
    <property type="entry name" value="DNA polymerase, Y-family, little finger domain"/>
    <property type="match status" value="1"/>
</dbReference>
<dbReference type="HAMAP" id="MF_01113">
    <property type="entry name" value="DNApol_IV"/>
    <property type="match status" value="1"/>
</dbReference>
<dbReference type="InterPro" id="IPR043502">
    <property type="entry name" value="DNA/RNA_pol_sf"/>
</dbReference>
<dbReference type="InterPro" id="IPR036775">
    <property type="entry name" value="DNA_pol_Y-fam_lit_finger_sf"/>
</dbReference>
<dbReference type="InterPro" id="IPR017961">
    <property type="entry name" value="DNA_pol_Y-fam_little_finger"/>
</dbReference>
<dbReference type="InterPro" id="IPR050116">
    <property type="entry name" value="DNA_polymerase-Y"/>
</dbReference>
<dbReference type="InterPro" id="IPR022880">
    <property type="entry name" value="DNApol_IV"/>
</dbReference>
<dbReference type="InterPro" id="IPR024728">
    <property type="entry name" value="PolY_HhH_motif"/>
</dbReference>
<dbReference type="InterPro" id="IPR043128">
    <property type="entry name" value="Rev_trsase/Diguanyl_cyclase"/>
</dbReference>
<dbReference type="InterPro" id="IPR001126">
    <property type="entry name" value="UmuC"/>
</dbReference>
<dbReference type="NCBIfam" id="NF002677">
    <property type="entry name" value="PRK02406.1"/>
    <property type="match status" value="1"/>
</dbReference>
<dbReference type="PANTHER" id="PTHR11076:SF33">
    <property type="entry name" value="DNA POLYMERASE KAPPA"/>
    <property type="match status" value="1"/>
</dbReference>
<dbReference type="PANTHER" id="PTHR11076">
    <property type="entry name" value="DNA REPAIR POLYMERASE UMUC / TRANSFERASE FAMILY MEMBER"/>
    <property type="match status" value="1"/>
</dbReference>
<dbReference type="Pfam" id="PF00817">
    <property type="entry name" value="IMS"/>
    <property type="match status" value="1"/>
</dbReference>
<dbReference type="Pfam" id="PF11799">
    <property type="entry name" value="IMS_C"/>
    <property type="match status" value="1"/>
</dbReference>
<dbReference type="Pfam" id="PF11798">
    <property type="entry name" value="IMS_HHH"/>
    <property type="match status" value="1"/>
</dbReference>
<dbReference type="SUPFAM" id="SSF56672">
    <property type="entry name" value="DNA/RNA polymerases"/>
    <property type="match status" value="1"/>
</dbReference>
<dbReference type="SUPFAM" id="SSF100879">
    <property type="entry name" value="Lesion bypass DNA polymerase (Y-family), little finger domain"/>
    <property type="match status" value="1"/>
</dbReference>
<dbReference type="PROSITE" id="PS50173">
    <property type="entry name" value="UMUC"/>
    <property type="match status" value="1"/>
</dbReference>